<accession>A8AKT8</accession>
<dbReference type="EC" id="2.7.7.6" evidence="1"/>
<dbReference type="EMBL" id="CP000822">
    <property type="protein sequence ID" value="ABV14101.1"/>
    <property type="molecule type" value="Genomic_DNA"/>
</dbReference>
<dbReference type="RefSeq" id="WP_012133810.1">
    <property type="nucleotide sequence ID" value="NC_009792.1"/>
</dbReference>
<dbReference type="SMR" id="A8AKT8"/>
<dbReference type="STRING" id="290338.CKO_03001"/>
<dbReference type="GeneID" id="45136814"/>
<dbReference type="KEGG" id="cko:CKO_03001"/>
<dbReference type="HOGENOM" id="CLU_000524_3_1_6"/>
<dbReference type="OrthoDB" id="9815296at2"/>
<dbReference type="Proteomes" id="UP000008148">
    <property type="component" value="Chromosome"/>
</dbReference>
<dbReference type="GO" id="GO:0000428">
    <property type="term" value="C:DNA-directed RNA polymerase complex"/>
    <property type="evidence" value="ECO:0007669"/>
    <property type="project" value="UniProtKB-KW"/>
</dbReference>
<dbReference type="GO" id="GO:0003677">
    <property type="term" value="F:DNA binding"/>
    <property type="evidence" value="ECO:0007669"/>
    <property type="project" value="UniProtKB-UniRule"/>
</dbReference>
<dbReference type="GO" id="GO:0003899">
    <property type="term" value="F:DNA-directed RNA polymerase activity"/>
    <property type="evidence" value="ECO:0007669"/>
    <property type="project" value="UniProtKB-UniRule"/>
</dbReference>
<dbReference type="GO" id="GO:0000287">
    <property type="term" value="F:magnesium ion binding"/>
    <property type="evidence" value="ECO:0007669"/>
    <property type="project" value="UniProtKB-UniRule"/>
</dbReference>
<dbReference type="GO" id="GO:0008270">
    <property type="term" value="F:zinc ion binding"/>
    <property type="evidence" value="ECO:0007669"/>
    <property type="project" value="UniProtKB-UniRule"/>
</dbReference>
<dbReference type="GO" id="GO:0006351">
    <property type="term" value="P:DNA-templated transcription"/>
    <property type="evidence" value="ECO:0007669"/>
    <property type="project" value="UniProtKB-UniRule"/>
</dbReference>
<dbReference type="CDD" id="cd02655">
    <property type="entry name" value="RNAP_beta'_C"/>
    <property type="match status" value="1"/>
</dbReference>
<dbReference type="CDD" id="cd01609">
    <property type="entry name" value="RNAP_beta'_N"/>
    <property type="match status" value="1"/>
</dbReference>
<dbReference type="FunFam" id="1.10.132.30:FF:000003">
    <property type="entry name" value="DNA-directed RNA polymerase subunit beta"/>
    <property type="match status" value="1"/>
</dbReference>
<dbReference type="FunFam" id="1.10.150.390:FF:000002">
    <property type="entry name" value="DNA-directed RNA polymerase subunit beta"/>
    <property type="match status" value="1"/>
</dbReference>
<dbReference type="FunFam" id="1.10.274.100:FF:000002">
    <property type="entry name" value="DNA-directed RNA polymerase subunit beta"/>
    <property type="match status" value="1"/>
</dbReference>
<dbReference type="FunFam" id="1.10.40.90:FF:000001">
    <property type="entry name" value="DNA-directed RNA polymerase subunit beta"/>
    <property type="match status" value="1"/>
</dbReference>
<dbReference type="FunFam" id="2.40.50.100:FF:000012">
    <property type="entry name" value="DNA-directed RNA polymerase subunit beta"/>
    <property type="match status" value="1"/>
</dbReference>
<dbReference type="FunFam" id="2.40.50.100:FF:000016">
    <property type="entry name" value="DNA-directed RNA polymerase subunit beta"/>
    <property type="match status" value="1"/>
</dbReference>
<dbReference type="FunFam" id="2.40.50.100:FF:000019">
    <property type="entry name" value="DNA-directed RNA polymerase subunit beta"/>
    <property type="match status" value="1"/>
</dbReference>
<dbReference type="FunFam" id="4.10.860.120:FF:000001">
    <property type="entry name" value="DNA-directed RNA polymerase subunit beta"/>
    <property type="match status" value="1"/>
</dbReference>
<dbReference type="Gene3D" id="1.10.132.30">
    <property type="match status" value="1"/>
</dbReference>
<dbReference type="Gene3D" id="1.10.150.390">
    <property type="match status" value="1"/>
</dbReference>
<dbReference type="Gene3D" id="1.10.1790.20">
    <property type="match status" value="1"/>
</dbReference>
<dbReference type="Gene3D" id="1.10.40.90">
    <property type="match status" value="1"/>
</dbReference>
<dbReference type="Gene3D" id="2.40.40.20">
    <property type="match status" value="1"/>
</dbReference>
<dbReference type="Gene3D" id="2.40.50.100">
    <property type="match status" value="3"/>
</dbReference>
<dbReference type="Gene3D" id="4.10.860.120">
    <property type="entry name" value="RNA polymerase II, clamp domain"/>
    <property type="match status" value="1"/>
</dbReference>
<dbReference type="Gene3D" id="1.10.274.100">
    <property type="entry name" value="RNA polymerase Rpb1, domain 3"/>
    <property type="match status" value="1"/>
</dbReference>
<dbReference type="HAMAP" id="MF_01322">
    <property type="entry name" value="RNApol_bact_RpoC"/>
    <property type="match status" value="1"/>
</dbReference>
<dbReference type="InterPro" id="IPR045867">
    <property type="entry name" value="DNA-dir_RpoC_beta_prime"/>
</dbReference>
<dbReference type="InterPro" id="IPR012754">
    <property type="entry name" value="DNA-dir_RpoC_beta_prime_bact"/>
</dbReference>
<dbReference type="InterPro" id="IPR000722">
    <property type="entry name" value="RNA_pol_asu"/>
</dbReference>
<dbReference type="InterPro" id="IPR006592">
    <property type="entry name" value="RNA_pol_N"/>
</dbReference>
<dbReference type="InterPro" id="IPR007080">
    <property type="entry name" value="RNA_pol_Rpb1_1"/>
</dbReference>
<dbReference type="InterPro" id="IPR007066">
    <property type="entry name" value="RNA_pol_Rpb1_3"/>
</dbReference>
<dbReference type="InterPro" id="IPR042102">
    <property type="entry name" value="RNA_pol_Rpb1_3_sf"/>
</dbReference>
<dbReference type="InterPro" id="IPR007083">
    <property type="entry name" value="RNA_pol_Rpb1_4"/>
</dbReference>
<dbReference type="InterPro" id="IPR007081">
    <property type="entry name" value="RNA_pol_Rpb1_5"/>
</dbReference>
<dbReference type="InterPro" id="IPR044893">
    <property type="entry name" value="RNA_pol_Rpb1_clamp_domain"/>
</dbReference>
<dbReference type="InterPro" id="IPR038120">
    <property type="entry name" value="Rpb1_funnel_sf"/>
</dbReference>
<dbReference type="NCBIfam" id="TIGR02386">
    <property type="entry name" value="rpoC_TIGR"/>
    <property type="match status" value="1"/>
</dbReference>
<dbReference type="PANTHER" id="PTHR19376">
    <property type="entry name" value="DNA-DIRECTED RNA POLYMERASE"/>
    <property type="match status" value="1"/>
</dbReference>
<dbReference type="PANTHER" id="PTHR19376:SF54">
    <property type="entry name" value="DNA-DIRECTED RNA POLYMERASE SUBUNIT BETA"/>
    <property type="match status" value="1"/>
</dbReference>
<dbReference type="Pfam" id="PF04997">
    <property type="entry name" value="RNA_pol_Rpb1_1"/>
    <property type="match status" value="1"/>
</dbReference>
<dbReference type="Pfam" id="PF00623">
    <property type="entry name" value="RNA_pol_Rpb1_2"/>
    <property type="match status" value="2"/>
</dbReference>
<dbReference type="Pfam" id="PF04983">
    <property type="entry name" value="RNA_pol_Rpb1_3"/>
    <property type="match status" value="1"/>
</dbReference>
<dbReference type="Pfam" id="PF05000">
    <property type="entry name" value="RNA_pol_Rpb1_4"/>
    <property type="match status" value="1"/>
</dbReference>
<dbReference type="Pfam" id="PF04998">
    <property type="entry name" value="RNA_pol_Rpb1_5"/>
    <property type="match status" value="1"/>
</dbReference>
<dbReference type="SMART" id="SM00663">
    <property type="entry name" value="RPOLA_N"/>
    <property type="match status" value="1"/>
</dbReference>
<dbReference type="SUPFAM" id="SSF64484">
    <property type="entry name" value="beta and beta-prime subunits of DNA dependent RNA-polymerase"/>
    <property type="match status" value="1"/>
</dbReference>
<protein>
    <recommendedName>
        <fullName evidence="1">DNA-directed RNA polymerase subunit beta'</fullName>
        <shortName evidence="1">RNAP subunit beta'</shortName>
        <ecNumber evidence="1">2.7.7.6</ecNumber>
    </recommendedName>
    <alternativeName>
        <fullName evidence="1">RNA polymerase subunit beta'</fullName>
    </alternativeName>
    <alternativeName>
        <fullName evidence="1">Transcriptase subunit beta'</fullName>
    </alternativeName>
</protein>
<reference key="1">
    <citation type="submission" date="2007-08" db="EMBL/GenBank/DDBJ databases">
        <authorList>
            <consortium name="The Citrobacter koseri Genome Sequencing Project"/>
            <person name="McClelland M."/>
            <person name="Sanderson E.K."/>
            <person name="Porwollik S."/>
            <person name="Spieth J."/>
            <person name="Clifton W.S."/>
            <person name="Latreille P."/>
            <person name="Courtney L."/>
            <person name="Wang C."/>
            <person name="Pepin K."/>
            <person name="Bhonagiri V."/>
            <person name="Nash W."/>
            <person name="Johnson M."/>
            <person name="Thiruvilangam P."/>
            <person name="Wilson R."/>
        </authorList>
    </citation>
    <scope>NUCLEOTIDE SEQUENCE [LARGE SCALE GENOMIC DNA]</scope>
    <source>
        <strain>ATCC BAA-895 / CDC 4225-83 / SGSC4696</strain>
    </source>
</reference>
<feature type="chain" id="PRO_0000353326" description="DNA-directed RNA polymerase subunit beta'">
    <location>
        <begin position="1"/>
        <end position="1407"/>
    </location>
</feature>
<feature type="binding site" evidence="1">
    <location>
        <position position="70"/>
    </location>
    <ligand>
        <name>Zn(2+)</name>
        <dbReference type="ChEBI" id="CHEBI:29105"/>
        <label>1</label>
    </ligand>
</feature>
<feature type="binding site" evidence="1">
    <location>
        <position position="72"/>
    </location>
    <ligand>
        <name>Zn(2+)</name>
        <dbReference type="ChEBI" id="CHEBI:29105"/>
        <label>1</label>
    </ligand>
</feature>
<feature type="binding site" evidence="1">
    <location>
        <position position="85"/>
    </location>
    <ligand>
        <name>Zn(2+)</name>
        <dbReference type="ChEBI" id="CHEBI:29105"/>
        <label>1</label>
    </ligand>
</feature>
<feature type="binding site" evidence="1">
    <location>
        <position position="88"/>
    </location>
    <ligand>
        <name>Zn(2+)</name>
        <dbReference type="ChEBI" id="CHEBI:29105"/>
        <label>1</label>
    </ligand>
</feature>
<feature type="binding site" evidence="1">
    <location>
        <position position="460"/>
    </location>
    <ligand>
        <name>Mg(2+)</name>
        <dbReference type="ChEBI" id="CHEBI:18420"/>
    </ligand>
</feature>
<feature type="binding site" evidence="1">
    <location>
        <position position="462"/>
    </location>
    <ligand>
        <name>Mg(2+)</name>
        <dbReference type="ChEBI" id="CHEBI:18420"/>
    </ligand>
</feature>
<feature type="binding site" evidence="1">
    <location>
        <position position="464"/>
    </location>
    <ligand>
        <name>Mg(2+)</name>
        <dbReference type="ChEBI" id="CHEBI:18420"/>
    </ligand>
</feature>
<feature type="binding site" evidence="1">
    <location>
        <position position="814"/>
    </location>
    <ligand>
        <name>Zn(2+)</name>
        <dbReference type="ChEBI" id="CHEBI:29105"/>
        <label>2</label>
    </ligand>
</feature>
<feature type="binding site" evidence="1">
    <location>
        <position position="888"/>
    </location>
    <ligand>
        <name>Zn(2+)</name>
        <dbReference type="ChEBI" id="CHEBI:29105"/>
        <label>2</label>
    </ligand>
</feature>
<feature type="binding site" evidence="1">
    <location>
        <position position="895"/>
    </location>
    <ligand>
        <name>Zn(2+)</name>
        <dbReference type="ChEBI" id="CHEBI:29105"/>
        <label>2</label>
    </ligand>
</feature>
<feature type="binding site" evidence="1">
    <location>
        <position position="898"/>
    </location>
    <ligand>
        <name>Zn(2+)</name>
        <dbReference type="ChEBI" id="CHEBI:29105"/>
        <label>2</label>
    </ligand>
</feature>
<evidence type="ECO:0000255" key="1">
    <source>
        <dbReference type="HAMAP-Rule" id="MF_01322"/>
    </source>
</evidence>
<gene>
    <name evidence="1" type="primary">rpoC</name>
    <name type="ordered locus">CKO_03001</name>
</gene>
<proteinExistence type="inferred from homology"/>
<organism>
    <name type="scientific">Citrobacter koseri (strain ATCC BAA-895 / CDC 4225-83 / SGSC4696)</name>
    <dbReference type="NCBI Taxonomy" id="290338"/>
    <lineage>
        <taxon>Bacteria</taxon>
        <taxon>Pseudomonadati</taxon>
        <taxon>Pseudomonadota</taxon>
        <taxon>Gammaproteobacteria</taxon>
        <taxon>Enterobacterales</taxon>
        <taxon>Enterobacteriaceae</taxon>
        <taxon>Citrobacter</taxon>
    </lineage>
</organism>
<comment type="function">
    <text evidence="1">DNA-dependent RNA polymerase catalyzes the transcription of DNA into RNA using the four ribonucleoside triphosphates as substrates.</text>
</comment>
<comment type="catalytic activity">
    <reaction evidence="1">
        <text>RNA(n) + a ribonucleoside 5'-triphosphate = RNA(n+1) + diphosphate</text>
        <dbReference type="Rhea" id="RHEA:21248"/>
        <dbReference type="Rhea" id="RHEA-COMP:14527"/>
        <dbReference type="Rhea" id="RHEA-COMP:17342"/>
        <dbReference type="ChEBI" id="CHEBI:33019"/>
        <dbReference type="ChEBI" id="CHEBI:61557"/>
        <dbReference type="ChEBI" id="CHEBI:140395"/>
        <dbReference type="EC" id="2.7.7.6"/>
    </reaction>
</comment>
<comment type="cofactor">
    <cofactor evidence="1">
        <name>Mg(2+)</name>
        <dbReference type="ChEBI" id="CHEBI:18420"/>
    </cofactor>
    <text evidence="1">Binds 1 Mg(2+) ion per subunit.</text>
</comment>
<comment type="cofactor">
    <cofactor evidence="1">
        <name>Zn(2+)</name>
        <dbReference type="ChEBI" id="CHEBI:29105"/>
    </cofactor>
    <text evidence="1">Binds 2 Zn(2+) ions per subunit.</text>
</comment>
<comment type="subunit">
    <text evidence="1">The RNAP catalytic core consists of 2 alpha, 1 beta, 1 beta' and 1 omega subunit. When a sigma factor is associated with the core the holoenzyme is formed, which can initiate transcription.</text>
</comment>
<comment type="similarity">
    <text evidence="1">Belongs to the RNA polymerase beta' chain family.</text>
</comment>
<keyword id="KW-0240">DNA-directed RNA polymerase</keyword>
<keyword id="KW-0460">Magnesium</keyword>
<keyword id="KW-0479">Metal-binding</keyword>
<keyword id="KW-0548">Nucleotidyltransferase</keyword>
<keyword id="KW-1185">Reference proteome</keyword>
<keyword id="KW-0804">Transcription</keyword>
<keyword id="KW-0808">Transferase</keyword>
<keyword id="KW-0862">Zinc</keyword>
<name>RPOC_CITK8</name>
<sequence length="1407" mass="155211">MKDLLKFLKAQTKTEEFDAIKIALASPDMIRSWSFGEVKKPETINYRTFKPERDGLFCARIFGPVKDYECLCGKYKRLKHRGVICEKCGVEVTQTKVRRERMGHIELASPTAHIWFLKSLPSRIGLLLDMPLRDIERVLYFESYVVIEGGMTNLERQQILTEEQYLDALEEFGDEFDAKMGAEAIQALLKSMDLEQECETLREELNETNSETKRKKLTKRIKLLEAFVQSGNKPEWMILTVLPVLPPDLRPLVPLDGGRFATSDLNDLYRRVINRNNRLKRLLDLAAPDIIVRNEKRMLQEAVDALLDNGRRGRAITGSNKRPLKSLADMIKGKQGRFRQNLLGKRVDYSGRSVITVGPYLRLHQCGLPKKMALELFKPFIYGKLELRGLATTIKAAKKMVEREEAVVWDILDEVIREHPVLLNRAPTLHRLGIQAFEPVLIEGKAIQLHPLVCAAYNADFDGDQMAVHVPLTLEAQLEARALMMSTNNILSPANGEPIIVPSQDVVLGLYYMTRDCVNAKGEGMVLTGPKEAERIYRAGLASLHARVKVRITEYEKDANGEFVAKTSLKDTTIGRAILWMIVPKGLPFSIVNQALGKKAISKMLNTCYRILGLKPTVIFADQTMYTGFAYAARSGASVGIDDMVIPEKKHEIISEAEAEVAEIQEQFQSGLVTAGERYNKVIDIWAAANDRVSKAMMDNLQTETVINRDGQEEQQVSFNSIYMMADSGARGSAAQIRQLAGMRGLMAKPDGSIIETPITANFREGLNVLQYFISTHGARKGLADTALKTANSGYLTRRLVDVAQDLVVTEDDCGTHEGILMTPVIEGGDVKEPLRDRVLGRVTAEDVLKPGTADILVPRNTLLHEQWCDLLEENSVDAVKVRSVVSCDTDFGVCAHCYGRDLARGHIINKGEAIGVIAAQSIGEPGTQLTMRTFHIGGAASRAAAESSIQVKNKGSIRLSNAKSVVNSSGKLVITSRNTELKLIDEFGRTKESYKVPYGSVMAKGDGEQVAGGETVANWDPHTMPVITEVSGFVRFTDMIDGQTITRQTDELTGLSSLVVLDSAERTTGGKDLRPALKIVDAQGNDVLIPGTDMPAQYFLPGKAIVQLEDGVQISSGDTLARVPQESGGTKDITGGLPRVADLFEARRPKEPAILAEISGIISFGKETKGKRRLVITPVDGSEPYEEMIPKWRQLNVFEGERVERGDVVSDGPEAPHDILRLRGVHAVTRYIVNEVQDVYRLQGVKINDKHIEVIVRQMLRKATIENAGSSDFLEGEQVEYSRVKIANRDLEANGKVGATFSRDLLGITKASLATESFISAASFQETTRVLTEAAVAGKRDELRGLKENVIVGRLIPAGTGYAYHQDRMRRRAAGELPAAPQVTAEDASASLAELLNAGLGGSDND</sequence>